<comment type="function">
    <text evidence="1">Catalyzes the attachment of proline to tRNA(Pro) in a two-step reaction: proline is first activated by ATP to form Pro-AMP and then transferred to the acceptor end of tRNA(Pro). As ProRS can inadvertently accommodate and process non-cognate amino acids such as alanine and cysteine, to avoid such errors it has two additional distinct editing activities against alanine. One activity is designated as 'pretransfer' editing and involves the tRNA(Pro)-independent hydrolysis of activated Ala-AMP. The other activity is designated 'posttransfer' editing and involves deacylation of mischarged Ala-tRNA(Pro). The misacylated Cys-tRNA(Pro) is not edited by ProRS.</text>
</comment>
<comment type="catalytic activity">
    <reaction evidence="1">
        <text>tRNA(Pro) + L-proline + ATP = L-prolyl-tRNA(Pro) + AMP + diphosphate</text>
        <dbReference type="Rhea" id="RHEA:14305"/>
        <dbReference type="Rhea" id="RHEA-COMP:9700"/>
        <dbReference type="Rhea" id="RHEA-COMP:9702"/>
        <dbReference type="ChEBI" id="CHEBI:30616"/>
        <dbReference type="ChEBI" id="CHEBI:33019"/>
        <dbReference type="ChEBI" id="CHEBI:60039"/>
        <dbReference type="ChEBI" id="CHEBI:78442"/>
        <dbReference type="ChEBI" id="CHEBI:78532"/>
        <dbReference type="ChEBI" id="CHEBI:456215"/>
        <dbReference type="EC" id="6.1.1.15"/>
    </reaction>
</comment>
<comment type="subunit">
    <text evidence="1">Homodimer.</text>
</comment>
<comment type="subcellular location">
    <subcellularLocation>
        <location evidence="1">Cytoplasm</location>
    </subcellularLocation>
</comment>
<comment type="domain">
    <text evidence="1">Consists of three domains: the N-terminal catalytic domain, the editing domain and the C-terminal anticodon-binding domain.</text>
</comment>
<comment type="similarity">
    <text evidence="1">Belongs to the class-II aminoacyl-tRNA synthetase family. ProS type 1 subfamily.</text>
</comment>
<gene>
    <name evidence="1" type="primary">proS</name>
    <name type="ordered locus">FTW_0472</name>
</gene>
<proteinExistence type="inferred from homology"/>
<organism>
    <name type="scientific">Francisella tularensis subsp. tularensis (strain WY96-3418)</name>
    <dbReference type="NCBI Taxonomy" id="418136"/>
    <lineage>
        <taxon>Bacteria</taxon>
        <taxon>Pseudomonadati</taxon>
        <taxon>Pseudomonadota</taxon>
        <taxon>Gammaproteobacteria</taxon>
        <taxon>Thiotrichales</taxon>
        <taxon>Francisellaceae</taxon>
        <taxon>Francisella</taxon>
    </lineage>
</organism>
<name>SYP_FRATW</name>
<reference key="1">
    <citation type="journal article" date="2007" name="PLoS ONE">
        <title>Complete genomic characterization of a pathogenic A.II strain of Francisella tularensis subspecies tularensis.</title>
        <authorList>
            <person name="Beckstrom-Sternberg S.M."/>
            <person name="Auerbach R.K."/>
            <person name="Godbole S."/>
            <person name="Pearson J.V."/>
            <person name="Beckstrom-Sternberg J.S."/>
            <person name="Deng Z."/>
            <person name="Munk C."/>
            <person name="Kubota K."/>
            <person name="Zhou Y."/>
            <person name="Bruce D."/>
            <person name="Noronha J."/>
            <person name="Scheuermann R.H."/>
            <person name="Wang A."/>
            <person name="Wei X."/>
            <person name="Wang J."/>
            <person name="Hao J."/>
            <person name="Wagner D.M."/>
            <person name="Brettin T.S."/>
            <person name="Brown N."/>
            <person name="Gilna P."/>
            <person name="Keim P.S."/>
        </authorList>
    </citation>
    <scope>NUCLEOTIDE SEQUENCE [LARGE SCALE GENOMIC DNA]</scope>
    <source>
        <strain>WY96-3418</strain>
    </source>
</reference>
<evidence type="ECO:0000255" key="1">
    <source>
        <dbReference type="HAMAP-Rule" id="MF_01569"/>
    </source>
</evidence>
<accession>A4IWT9</accession>
<dbReference type="EC" id="6.1.1.15" evidence="1"/>
<dbReference type="EMBL" id="CP000608">
    <property type="protein sequence ID" value="ABO46391.1"/>
    <property type="molecule type" value="Genomic_DNA"/>
</dbReference>
<dbReference type="RefSeq" id="WP_003025330.1">
    <property type="nucleotide sequence ID" value="NC_009257.1"/>
</dbReference>
<dbReference type="SMR" id="A4IWT9"/>
<dbReference type="KEGG" id="ftw:FTW_0472"/>
<dbReference type="HOGENOM" id="CLU_016739_0_0_6"/>
<dbReference type="GO" id="GO:0005829">
    <property type="term" value="C:cytosol"/>
    <property type="evidence" value="ECO:0007669"/>
    <property type="project" value="TreeGrafter"/>
</dbReference>
<dbReference type="GO" id="GO:0002161">
    <property type="term" value="F:aminoacyl-tRNA deacylase activity"/>
    <property type="evidence" value="ECO:0007669"/>
    <property type="project" value="InterPro"/>
</dbReference>
<dbReference type="GO" id="GO:0005524">
    <property type="term" value="F:ATP binding"/>
    <property type="evidence" value="ECO:0007669"/>
    <property type="project" value="UniProtKB-UniRule"/>
</dbReference>
<dbReference type="GO" id="GO:0004827">
    <property type="term" value="F:proline-tRNA ligase activity"/>
    <property type="evidence" value="ECO:0007669"/>
    <property type="project" value="UniProtKB-UniRule"/>
</dbReference>
<dbReference type="GO" id="GO:0006433">
    <property type="term" value="P:prolyl-tRNA aminoacylation"/>
    <property type="evidence" value="ECO:0007669"/>
    <property type="project" value="UniProtKB-UniRule"/>
</dbReference>
<dbReference type="CDD" id="cd04334">
    <property type="entry name" value="ProRS-INS"/>
    <property type="match status" value="1"/>
</dbReference>
<dbReference type="CDD" id="cd00861">
    <property type="entry name" value="ProRS_anticodon_short"/>
    <property type="match status" value="1"/>
</dbReference>
<dbReference type="CDD" id="cd00779">
    <property type="entry name" value="ProRS_core_prok"/>
    <property type="match status" value="1"/>
</dbReference>
<dbReference type="FunFam" id="3.30.930.10:FF:000015">
    <property type="entry name" value="Proline--tRNA ligase"/>
    <property type="match status" value="1"/>
</dbReference>
<dbReference type="Gene3D" id="3.40.50.800">
    <property type="entry name" value="Anticodon-binding domain"/>
    <property type="match status" value="1"/>
</dbReference>
<dbReference type="Gene3D" id="3.30.930.10">
    <property type="entry name" value="Bira Bifunctional Protein, Domain 2"/>
    <property type="match status" value="2"/>
</dbReference>
<dbReference type="HAMAP" id="MF_01569">
    <property type="entry name" value="Pro_tRNA_synth_type1"/>
    <property type="match status" value="1"/>
</dbReference>
<dbReference type="InterPro" id="IPR002314">
    <property type="entry name" value="aa-tRNA-synt_IIb"/>
</dbReference>
<dbReference type="InterPro" id="IPR006195">
    <property type="entry name" value="aa-tRNA-synth_II"/>
</dbReference>
<dbReference type="InterPro" id="IPR045864">
    <property type="entry name" value="aa-tRNA-synth_II/BPL/LPL"/>
</dbReference>
<dbReference type="InterPro" id="IPR004154">
    <property type="entry name" value="Anticodon-bd"/>
</dbReference>
<dbReference type="InterPro" id="IPR036621">
    <property type="entry name" value="Anticodon-bd_dom_sf"/>
</dbReference>
<dbReference type="InterPro" id="IPR002316">
    <property type="entry name" value="Pro-tRNA-ligase_IIa"/>
</dbReference>
<dbReference type="InterPro" id="IPR004500">
    <property type="entry name" value="Pro-tRNA-synth_IIa_bac-type"/>
</dbReference>
<dbReference type="InterPro" id="IPR023717">
    <property type="entry name" value="Pro-tRNA-Synthase_IIa_type1"/>
</dbReference>
<dbReference type="InterPro" id="IPR050062">
    <property type="entry name" value="Pro-tRNA_synthetase"/>
</dbReference>
<dbReference type="InterPro" id="IPR044140">
    <property type="entry name" value="ProRS_anticodon_short"/>
</dbReference>
<dbReference type="InterPro" id="IPR033730">
    <property type="entry name" value="ProRS_core_prok"/>
</dbReference>
<dbReference type="InterPro" id="IPR036754">
    <property type="entry name" value="YbaK/aa-tRNA-synt-asso_dom_sf"/>
</dbReference>
<dbReference type="InterPro" id="IPR007214">
    <property type="entry name" value="YbaK/aa-tRNA-synth-assoc-dom"/>
</dbReference>
<dbReference type="NCBIfam" id="NF006625">
    <property type="entry name" value="PRK09194.1"/>
    <property type="match status" value="1"/>
</dbReference>
<dbReference type="NCBIfam" id="TIGR00409">
    <property type="entry name" value="proS_fam_II"/>
    <property type="match status" value="1"/>
</dbReference>
<dbReference type="PANTHER" id="PTHR42753">
    <property type="entry name" value="MITOCHONDRIAL RIBOSOME PROTEIN L39/PROLYL-TRNA LIGASE FAMILY MEMBER"/>
    <property type="match status" value="1"/>
</dbReference>
<dbReference type="PANTHER" id="PTHR42753:SF2">
    <property type="entry name" value="PROLINE--TRNA LIGASE"/>
    <property type="match status" value="1"/>
</dbReference>
<dbReference type="Pfam" id="PF03129">
    <property type="entry name" value="HGTP_anticodon"/>
    <property type="match status" value="1"/>
</dbReference>
<dbReference type="Pfam" id="PF00587">
    <property type="entry name" value="tRNA-synt_2b"/>
    <property type="match status" value="1"/>
</dbReference>
<dbReference type="Pfam" id="PF04073">
    <property type="entry name" value="tRNA_edit"/>
    <property type="match status" value="1"/>
</dbReference>
<dbReference type="PRINTS" id="PR01046">
    <property type="entry name" value="TRNASYNTHPRO"/>
</dbReference>
<dbReference type="SUPFAM" id="SSF52954">
    <property type="entry name" value="Class II aaRS ABD-related"/>
    <property type="match status" value="1"/>
</dbReference>
<dbReference type="SUPFAM" id="SSF55681">
    <property type="entry name" value="Class II aaRS and biotin synthetases"/>
    <property type="match status" value="1"/>
</dbReference>
<dbReference type="SUPFAM" id="SSF55826">
    <property type="entry name" value="YbaK/ProRS associated domain"/>
    <property type="match status" value="1"/>
</dbReference>
<dbReference type="PROSITE" id="PS50862">
    <property type="entry name" value="AA_TRNA_LIGASE_II"/>
    <property type="match status" value="1"/>
</dbReference>
<keyword id="KW-0030">Aminoacyl-tRNA synthetase</keyword>
<keyword id="KW-0067">ATP-binding</keyword>
<keyword id="KW-0963">Cytoplasm</keyword>
<keyword id="KW-0436">Ligase</keyword>
<keyword id="KW-0547">Nucleotide-binding</keyword>
<keyword id="KW-0648">Protein biosynthesis</keyword>
<feature type="chain" id="PRO_1000069141" description="Proline--tRNA ligase">
    <location>
        <begin position="1"/>
        <end position="565"/>
    </location>
</feature>
<sequence>MKATQTLIATTKELPKEAVLISHQYMLKAGLIKKLASGIYTWMPLGLKVLQKIQNIVRDEMNKAGASELLLPSILPSELLQETHRWDKFGPELLKLHDRHNRDFCYGPTHEEPIVDMARDTIKSYKQLPLNLYQIQTKFRDEIRPRFGVMRAREFIMKDAYSFHENSQCLRNTYNTMYATYCNILDKIGLAYRPVKADTGAIGGDNSHEFQVLANAGEDIICYSNGSDYAANIELATYAKPDLSKRVNSQNTIEKIHTPNIKTIEKLCKEMSFDIKKTIKTMVIKDAGGNFFALVIRGDHELNETKINKLDQIIAPYTLATKEEIFSIFNANPGSLGIYNCPISIIADYSAIAITDLVCGANEDDYHFTNVNWDRDVTNYQIADIRNVVTGDISPDGKGTLELTNGIEVGHIFELEDVYSKPMNANIIGQDGKSKPMLMGCYGFGVSRVMAAAIEQSHDENGIIWPESIAPYQVAILPINYNKSDKIKEVADKLYQDLLGDGIDVLLDDRGARPGVMFADADLIGYSHHVVIGDRLLEQGLIEYKNRKTQEKQEITIAELIKILK</sequence>
<protein>
    <recommendedName>
        <fullName evidence="1">Proline--tRNA ligase</fullName>
        <ecNumber evidence="1">6.1.1.15</ecNumber>
    </recommendedName>
    <alternativeName>
        <fullName evidence="1">Prolyl-tRNA synthetase</fullName>
        <shortName evidence="1">ProRS</shortName>
    </alternativeName>
</protein>